<comment type="function">
    <text evidence="3">Subunit of the nitrite reductase complex that mediates electron transfer from quinol to the catalytic subunit.</text>
</comment>
<comment type="subunit">
    <text evidence="3">Heterodimer with NrfA.</text>
</comment>
<comment type="subcellular location">
    <subcellularLocation>
        <location evidence="4">Cell inner membrane</location>
        <topology evidence="4">Single-pass membrane protein</topology>
        <orientation evidence="4">Periplasmic side</orientation>
    </subcellularLocation>
</comment>
<comment type="PTM">
    <text>Binds 4 heme groups per subunit.</text>
</comment>
<comment type="PTM">
    <text evidence="3">The N-terminus is blocked.</text>
</comment>
<comment type="similarity">
    <text evidence="4">Belongs to the NapC/NirT/NrfH family.</text>
</comment>
<keyword id="KW-0997">Cell inner membrane</keyword>
<keyword id="KW-1003">Cell membrane</keyword>
<keyword id="KW-0903">Direct protein sequencing</keyword>
<keyword id="KW-0249">Electron transport</keyword>
<keyword id="KW-0349">Heme</keyword>
<keyword id="KW-0408">Iron</keyword>
<keyword id="KW-0472">Membrane</keyword>
<keyword id="KW-0479">Metal-binding</keyword>
<keyword id="KW-1185">Reference proteome</keyword>
<keyword id="KW-0812">Transmembrane</keyword>
<keyword id="KW-1133">Transmembrane helix</keyword>
<keyword id="KW-0813">Transport</keyword>
<organism>
    <name type="scientific">Wolinella succinogenes (strain ATCC 29543 / DSM 1740 / CCUG 13145 / JCM 31913 / LMG 7466 / NCTC 11488 / FDC 602W)</name>
    <name type="common">Vibrio succinogenes</name>
    <dbReference type="NCBI Taxonomy" id="273121"/>
    <lineage>
        <taxon>Bacteria</taxon>
        <taxon>Pseudomonadati</taxon>
        <taxon>Campylobacterota</taxon>
        <taxon>Epsilonproteobacteria</taxon>
        <taxon>Campylobacterales</taxon>
        <taxon>Helicobacteraceae</taxon>
        <taxon>Wolinella</taxon>
    </lineage>
</organism>
<gene>
    <name type="primary">nrfH</name>
    <name type="ordered locus">WS0970</name>
</gene>
<sequence length="177" mass="19699">MNKSKFLVYSSLVVFAIALGLFVYLVNASKALSYLSSDPKACINCHVMNPQYATWQHSSHAERASCVECHLPTGNMVQKYISKARDGWNHSVAFTLGTYDHSMKISEDGARRVQENCISCHASLSSTLLENADRNHQFNDPKGASERLCWECHKSVPHGKVRSLTATPDNLGVREVK</sequence>
<evidence type="ECO:0000250" key="1">
    <source>
        <dbReference type="UniProtKB" id="Q72EF4"/>
    </source>
</evidence>
<evidence type="ECO:0000255" key="2"/>
<evidence type="ECO:0000269" key="3">
    <source>
    </source>
</evidence>
<evidence type="ECO:0000305" key="4"/>
<feature type="chain" id="PRO_0000108439" description="Cytochrome c-type protein NrfH">
    <location>
        <begin position="1"/>
        <end position="177"/>
    </location>
</feature>
<feature type="topological domain" description="Cytoplasmic" evidence="2">
    <location>
        <begin position="1"/>
        <end position="5"/>
    </location>
</feature>
<feature type="transmembrane region" description="Helical" evidence="2">
    <location>
        <begin position="6"/>
        <end position="26"/>
    </location>
</feature>
<feature type="topological domain" description="Periplasmic" evidence="2">
    <location>
        <begin position="27"/>
        <end position="177"/>
    </location>
</feature>
<feature type="binding site" description="covalent" evidence="1">
    <location>
        <position position="42"/>
    </location>
    <ligand>
        <name>heme</name>
        <dbReference type="ChEBI" id="CHEBI:30413"/>
        <label>1</label>
    </ligand>
</feature>
<feature type="binding site" description="covalent" evidence="1">
    <location>
        <position position="45"/>
    </location>
    <ligand>
        <name>heme</name>
        <dbReference type="ChEBI" id="CHEBI:30413"/>
        <label>1</label>
    </ligand>
</feature>
<feature type="binding site" description="axial binding residue" evidence="1">
    <location>
        <position position="48"/>
    </location>
    <ligand>
        <name>heme</name>
        <dbReference type="ChEBI" id="CHEBI:30413"/>
        <label>1</label>
    </ligand>
    <ligandPart>
        <name>Fe</name>
        <dbReference type="ChEBI" id="CHEBI:18248"/>
    </ligandPart>
</feature>
<feature type="binding site" description="covalent" evidence="1">
    <location>
        <position position="66"/>
    </location>
    <ligand>
        <name>heme</name>
        <dbReference type="ChEBI" id="CHEBI:30413"/>
        <label>2</label>
    </ligand>
</feature>
<feature type="binding site" description="covalent" evidence="1">
    <location>
        <position position="69"/>
    </location>
    <ligand>
        <name>heme</name>
        <dbReference type="ChEBI" id="CHEBI:30413"/>
        <label>2</label>
    </ligand>
</feature>
<feature type="binding site" description="axial binding residue" evidence="1">
    <location>
        <position position="70"/>
    </location>
    <ligand>
        <name>heme</name>
        <dbReference type="ChEBI" id="CHEBI:30413"/>
        <label>2</label>
    </ligand>
    <ligandPart>
        <name>Fe</name>
        <dbReference type="ChEBI" id="CHEBI:18248"/>
    </ligandPart>
</feature>
<feature type="binding site" evidence="1">
    <location>
        <position position="79"/>
    </location>
    <ligand>
        <name>substrate</name>
    </ligand>
</feature>
<feature type="binding site" description="axial binding residue" evidence="1">
    <location>
        <position position="86"/>
    </location>
    <ligand>
        <name>heme</name>
        <dbReference type="ChEBI" id="CHEBI:30413"/>
        <label>1</label>
    </ligand>
    <ligandPart>
        <name>Fe</name>
        <dbReference type="ChEBI" id="CHEBI:18248"/>
    </ligandPart>
</feature>
<feature type="binding site" evidence="1">
    <location>
        <position position="86"/>
    </location>
    <ligand>
        <name>substrate</name>
    </ligand>
</feature>
<feature type="binding site" description="covalent" evidence="1">
    <location>
        <position position="117"/>
    </location>
    <ligand>
        <name>heme</name>
        <dbReference type="ChEBI" id="CHEBI:30413"/>
        <label>3</label>
    </ligand>
</feature>
<feature type="binding site" description="covalent" evidence="1">
    <location>
        <position position="120"/>
    </location>
    <ligand>
        <name>heme</name>
        <dbReference type="ChEBI" id="CHEBI:30413"/>
        <label>3</label>
    </ligand>
</feature>
<feature type="binding site" description="axial binding residue" evidence="1">
    <location>
        <position position="121"/>
    </location>
    <ligand>
        <name>heme</name>
        <dbReference type="ChEBI" id="CHEBI:30413"/>
        <label>3</label>
    </ligand>
    <ligandPart>
        <name>Fe</name>
        <dbReference type="ChEBI" id="CHEBI:18248"/>
    </ligandPart>
</feature>
<feature type="binding site" description="covalent" evidence="1">
    <location>
        <position position="149"/>
    </location>
    <ligand>
        <name>heme</name>
        <dbReference type="ChEBI" id="CHEBI:30413"/>
        <label>4</label>
    </ligand>
</feature>
<feature type="binding site" description="covalent" evidence="1">
    <location>
        <position position="152"/>
    </location>
    <ligand>
        <name>heme</name>
        <dbReference type="ChEBI" id="CHEBI:30413"/>
        <label>4</label>
    </ligand>
</feature>
<feature type="binding site" description="axial binding residue" evidence="1">
    <location>
        <position position="153"/>
    </location>
    <ligand>
        <name>heme</name>
        <dbReference type="ChEBI" id="CHEBI:30413"/>
        <label>4</label>
    </ligand>
    <ligandPart>
        <name>Fe</name>
        <dbReference type="ChEBI" id="CHEBI:18248"/>
    </ligandPart>
</feature>
<feature type="binding site" description="axial binding residue" evidence="1">
    <location>
        <position position="158"/>
    </location>
    <ligand>
        <name>heme</name>
        <dbReference type="ChEBI" id="CHEBI:30413"/>
        <label>2</label>
    </ligand>
    <ligandPart>
        <name>Fe</name>
        <dbReference type="ChEBI" id="CHEBI:18248"/>
    </ligandPart>
</feature>
<dbReference type="EMBL" id="AJ245540">
    <property type="protein sequence ID" value="CAB53159.1"/>
    <property type="molecule type" value="Genomic_DNA"/>
</dbReference>
<dbReference type="EMBL" id="BX571659">
    <property type="protein sequence ID" value="CAE10073.1"/>
    <property type="molecule type" value="Genomic_DNA"/>
</dbReference>
<dbReference type="RefSeq" id="WP_011138867.1">
    <property type="nucleotide sequence ID" value="NC_005090.1"/>
</dbReference>
<dbReference type="STRING" id="273121.WS0970"/>
<dbReference type="KEGG" id="wsu:WS0970"/>
<dbReference type="eggNOG" id="COG3005">
    <property type="taxonomic scope" value="Bacteria"/>
</dbReference>
<dbReference type="HOGENOM" id="CLU_096753_0_2_7"/>
<dbReference type="Proteomes" id="UP000000422">
    <property type="component" value="Chromosome"/>
</dbReference>
<dbReference type="GO" id="GO:0016020">
    <property type="term" value="C:membrane"/>
    <property type="evidence" value="ECO:0000314"/>
    <property type="project" value="UniProtKB"/>
</dbReference>
<dbReference type="GO" id="GO:0005886">
    <property type="term" value="C:plasma membrane"/>
    <property type="evidence" value="ECO:0007669"/>
    <property type="project" value="UniProtKB-SubCell"/>
</dbReference>
<dbReference type="GO" id="GO:0009055">
    <property type="term" value="F:electron transfer activity"/>
    <property type="evidence" value="ECO:0007669"/>
    <property type="project" value="TreeGrafter"/>
</dbReference>
<dbReference type="GO" id="GO:0020037">
    <property type="term" value="F:heme binding"/>
    <property type="evidence" value="ECO:0007669"/>
    <property type="project" value="InterPro"/>
</dbReference>
<dbReference type="GO" id="GO:0046872">
    <property type="term" value="F:metal ion binding"/>
    <property type="evidence" value="ECO:0007669"/>
    <property type="project" value="UniProtKB-KW"/>
</dbReference>
<dbReference type="GO" id="GO:0009061">
    <property type="term" value="P:anaerobic respiration"/>
    <property type="evidence" value="ECO:0000314"/>
    <property type="project" value="UniProtKB"/>
</dbReference>
<dbReference type="GO" id="GO:0019333">
    <property type="term" value="P:denitrification pathway"/>
    <property type="evidence" value="ECO:0007669"/>
    <property type="project" value="InterPro"/>
</dbReference>
<dbReference type="GO" id="GO:0022900">
    <property type="term" value="P:electron transport chain"/>
    <property type="evidence" value="ECO:0007669"/>
    <property type="project" value="InterPro"/>
</dbReference>
<dbReference type="Gene3D" id="1.10.3820.10">
    <property type="entry name" value="Di-heme elbow motif domain"/>
    <property type="match status" value="1"/>
</dbReference>
<dbReference type="InterPro" id="IPR051174">
    <property type="entry name" value="Cytochrome_c-type_ET"/>
</dbReference>
<dbReference type="InterPro" id="IPR036280">
    <property type="entry name" value="Multihaem_cyt_sf"/>
</dbReference>
<dbReference type="InterPro" id="IPR024717">
    <property type="entry name" value="NapC/NirT/NrfH"/>
</dbReference>
<dbReference type="InterPro" id="IPR005126">
    <property type="entry name" value="NapC/NirT_cyt_c_N"/>
</dbReference>
<dbReference type="InterPro" id="IPR038266">
    <property type="entry name" value="NapC/NirT_cytc_sf"/>
</dbReference>
<dbReference type="InterPro" id="IPR017571">
    <property type="entry name" value="NrfH"/>
</dbReference>
<dbReference type="NCBIfam" id="TIGR03153">
    <property type="entry name" value="cytochr_NrfH"/>
    <property type="match status" value="1"/>
</dbReference>
<dbReference type="PANTHER" id="PTHR30333">
    <property type="entry name" value="CYTOCHROME C-TYPE PROTEIN"/>
    <property type="match status" value="1"/>
</dbReference>
<dbReference type="PANTHER" id="PTHR30333:SF1">
    <property type="entry name" value="CYTOCHROME C-TYPE PROTEIN NAPC"/>
    <property type="match status" value="1"/>
</dbReference>
<dbReference type="Pfam" id="PF03264">
    <property type="entry name" value="Cytochrom_NNT"/>
    <property type="match status" value="1"/>
</dbReference>
<dbReference type="PIRSF" id="PIRSF000013">
    <property type="entry name" value="4_hem_cytochrm_NapC"/>
    <property type="match status" value="1"/>
</dbReference>
<dbReference type="SUPFAM" id="SSF48695">
    <property type="entry name" value="Multiheme cytochromes"/>
    <property type="match status" value="1"/>
</dbReference>
<dbReference type="PROSITE" id="PS51008">
    <property type="entry name" value="MULTIHEME_CYTC"/>
    <property type="match status" value="1"/>
</dbReference>
<reference evidence="4" key="1">
    <citation type="journal article" date="2000" name="Mol. Microbiol.">
        <title>A NapC/NirT-type cytochrome c (NrfH) is the mediator between the quinone pool and the cytochrome c nitrite reductase of Wolinella succinogenes.</title>
        <authorList>
            <person name="Simon J."/>
            <person name="Gross R."/>
            <person name="Einsle O."/>
            <person name="Kroneck P.M.H."/>
            <person name="Kroeger A."/>
            <person name="Klimmek O."/>
        </authorList>
    </citation>
    <scope>NUCLEOTIDE SEQUENCE [GENOMIC DNA]</scope>
    <scope>PROTEIN SEQUENCE OF 104-109</scope>
    <scope>FUNCTION</scope>
    <scope>SUBCELLULAR LOCATION</scope>
    <scope>SUBUNIT</scope>
</reference>
<reference key="2">
    <citation type="journal article" date="2003" name="Proc. Natl. Acad. Sci. U.S.A.">
        <title>Complete genome sequence and analysis of Wolinella succinogenes.</title>
        <authorList>
            <person name="Baar C."/>
            <person name="Eppinger M."/>
            <person name="Raddatz G."/>
            <person name="Simon J."/>
            <person name="Lanz C."/>
            <person name="Klimmek O."/>
            <person name="Nandakumar R."/>
            <person name="Gross R."/>
            <person name="Rosinus A."/>
            <person name="Keller H."/>
            <person name="Jagtap P."/>
            <person name="Linke B."/>
            <person name="Meyer F."/>
            <person name="Lederer H."/>
            <person name="Schuster S.C."/>
        </authorList>
    </citation>
    <scope>NUCLEOTIDE SEQUENCE [LARGE SCALE GENOMIC DNA]</scope>
    <source>
        <strain>ATCC 29543 / DSM 1740 / CCUG 13145 / JCM 31913 / LMG 7466 / NCTC 11488 / FDC 602W</strain>
    </source>
</reference>
<accession>Q9S1E6</accession>
<proteinExistence type="evidence at protein level"/>
<name>NRFH_WOLSU</name>
<protein>
    <recommendedName>
        <fullName>Cytochrome c-type protein NrfH</fullName>
    </recommendedName>
</protein>